<reference key="1">
    <citation type="journal article" date="2004" name="Science">
        <title>The complete genome sequence of Propionibacterium acnes, a commensal of human skin.</title>
        <authorList>
            <person name="Brueggemann H."/>
            <person name="Henne A."/>
            <person name="Hoster F."/>
            <person name="Liesegang H."/>
            <person name="Wiezer A."/>
            <person name="Strittmatter A."/>
            <person name="Hujer S."/>
            <person name="Duerre P."/>
            <person name="Gottschalk G."/>
        </authorList>
    </citation>
    <scope>NUCLEOTIDE SEQUENCE [LARGE SCALE GENOMIC DNA]</scope>
    <source>
        <strain>DSM 16379 / KPA171202</strain>
    </source>
</reference>
<sequence length="81" mass="9162">MKQGIHPDYHPVVFRDISADTAFLTRSTVTSSTEIKWQDGNTYPVIDVDITSASHPFYTGKAKIVDTAGRVEKFNRRYGKK</sequence>
<accession>Q6A5U9</accession>
<name>RL31B_CUTAK</name>
<feature type="chain" id="PRO_0000173247" description="Large ribosomal subunit protein bL31B">
    <location>
        <begin position="1"/>
        <end position="81"/>
    </location>
</feature>
<dbReference type="EMBL" id="AE017283">
    <property type="protein sequence ID" value="AAT83864.1"/>
    <property type="molecule type" value="Genomic_DNA"/>
</dbReference>
<dbReference type="RefSeq" id="WP_002516274.1">
    <property type="nucleotide sequence ID" value="NZ_CP025935.1"/>
</dbReference>
<dbReference type="SMR" id="Q6A5U9"/>
<dbReference type="EnsemblBacteria" id="AAT83864">
    <property type="protein sequence ID" value="AAT83864"/>
    <property type="gene ID" value="PPA2157"/>
</dbReference>
<dbReference type="KEGG" id="pac:PPA2157"/>
<dbReference type="eggNOG" id="COG0254">
    <property type="taxonomic scope" value="Bacteria"/>
</dbReference>
<dbReference type="HOGENOM" id="CLU_114306_2_2_11"/>
<dbReference type="Proteomes" id="UP000000603">
    <property type="component" value="Chromosome"/>
</dbReference>
<dbReference type="GO" id="GO:1990904">
    <property type="term" value="C:ribonucleoprotein complex"/>
    <property type="evidence" value="ECO:0007669"/>
    <property type="project" value="UniProtKB-KW"/>
</dbReference>
<dbReference type="GO" id="GO:0005840">
    <property type="term" value="C:ribosome"/>
    <property type="evidence" value="ECO:0007669"/>
    <property type="project" value="UniProtKB-KW"/>
</dbReference>
<dbReference type="GO" id="GO:0003735">
    <property type="term" value="F:structural constituent of ribosome"/>
    <property type="evidence" value="ECO:0007669"/>
    <property type="project" value="InterPro"/>
</dbReference>
<dbReference type="GO" id="GO:0006412">
    <property type="term" value="P:translation"/>
    <property type="evidence" value="ECO:0007669"/>
    <property type="project" value="UniProtKB-UniRule"/>
</dbReference>
<dbReference type="Gene3D" id="4.10.830.30">
    <property type="entry name" value="Ribosomal protein L31"/>
    <property type="match status" value="1"/>
</dbReference>
<dbReference type="HAMAP" id="MF_00502">
    <property type="entry name" value="Ribosomal_bL31_2"/>
    <property type="match status" value="1"/>
</dbReference>
<dbReference type="InterPro" id="IPR034704">
    <property type="entry name" value="Ribosomal_bL28/bL31-like_sf"/>
</dbReference>
<dbReference type="InterPro" id="IPR002150">
    <property type="entry name" value="Ribosomal_bL31"/>
</dbReference>
<dbReference type="InterPro" id="IPR027493">
    <property type="entry name" value="Ribosomal_bL31_B"/>
</dbReference>
<dbReference type="InterPro" id="IPR042105">
    <property type="entry name" value="Ribosomal_bL31_sf"/>
</dbReference>
<dbReference type="NCBIfam" id="TIGR00105">
    <property type="entry name" value="L31"/>
    <property type="match status" value="1"/>
</dbReference>
<dbReference type="NCBIfam" id="NF002462">
    <property type="entry name" value="PRK01678.1"/>
    <property type="match status" value="1"/>
</dbReference>
<dbReference type="PANTHER" id="PTHR33280">
    <property type="entry name" value="50S RIBOSOMAL PROTEIN L31, CHLOROPLASTIC"/>
    <property type="match status" value="1"/>
</dbReference>
<dbReference type="PANTHER" id="PTHR33280:SF1">
    <property type="entry name" value="LARGE RIBOSOMAL SUBUNIT PROTEIN BL31C"/>
    <property type="match status" value="1"/>
</dbReference>
<dbReference type="Pfam" id="PF01197">
    <property type="entry name" value="Ribosomal_L31"/>
    <property type="match status" value="1"/>
</dbReference>
<dbReference type="PRINTS" id="PR01249">
    <property type="entry name" value="RIBOSOMALL31"/>
</dbReference>
<dbReference type="SUPFAM" id="SSF143800">
    <property type="entry name" value="L28p-like"/>
    <property type="match status" value="1"/>
</dbReference>
<dbReference type="PROSITE" id="PS01143">
    <property type="entry name" value="RIBOSOMAL_L31"/>
    <property type="match status" value="1"/>
</dbReference>
<comment type="subunit">
    <text evidence="1">Part of the 50S ribosomal subunit.</text>
</comment>
<comment type="similarity">
    <text evidence="1">Belongs to the bacterial ribosomal protein bL31 family. Type B subfamily.</text>
</comment>
<evidence type="ECO:0000255" key="1">
    <source>
        <dbReference type="HAMAP-Rule" id="MF_00502"/>
    </source>
</evidence>
<evidence type="ECO:0000305" key="2"/>
<keyword id="KW-0687">Ribonucleoprotein</keyword>
<keyword id="KW-0689">Ribosomal protein</keyword>
<proteinExistence type="inferred from homology"/>
<organism>
    <name type="scientific">Cutibacterium acnes (strain DSM 16379 / KPA171202)</name>
    <name type="common">Propionibacterium acnes</name>
    <dbReference type="NCBI Taxonomy" id="267747"/>
    <lineage>
        <taxon>Bacteria</taxon>
        <taxon>Bacillati</taxon>
        <taxon>Actinomycetota</taxon>
        <taxon>Actinomycetes</taxon>
        <taxon>Propionibacteriales</taxon>
        <taxon>Propionibacteriaceae</taxon>
        <taxon>Cutibacterium</taxon>
    </lineage>
</organism>
<protein>
    <recommendedName>
        <fullName evidence="1">Large ribosomal subunit protein bL31B</fullName>
    </recommendedName>
    <alternativeName>
        <fullName evidence="2">50S ribosomal protein L31 type B</fullName>
    </alternativeName>
</protein>
<gene>
    <name evidence="1" type="primary">rpmE2</name>
    <name type="ordered locus">PPA2157</name>
</gene>